<organism>
    <name type="scientific">Arabidopsis thaliana</name>
    <name type="common">Mouse-ear cress</name>
    <dbReference type="NCBI Taxonomy" id="3702"/>
    <lineage>
        <taxon>Eukaryota</taxon>
        <taxon>Viridiplantae</taxon>
        <taxon>Streptophyta</taxon>
        <taxon>Embryophyta</taxon>
        <taxon>Tracheophyta</taxon>
        <taxon>Spermatophyta</taxon>
        <taxon>Magnoliopsida</taxon>
        <taxon>eudicotyledons</taxon>
        <taxon>Gunneridae</taxon>
        <taxon>Pentapetalae</taxon>
        <taxon>rosids</taxon>
        <taxon>malvids</taxon>
        <taxon>Brassicales</taxon>
        <taxon>Brassicaceae</taxon>
        <taxon>Camelineae</taxon>
        <taxon>Arabidopsis</taxon>
    </lineage>
</organism>
<feature type="signal peptide" evidence="9">
    <location>
        <begin position="1"/>
        <end position="20"/>
    </location>
</feature>
<feature type="chain" id="PRO_5009954980" description="Leucine-rich repeat receptor-like serine/threonine-protein kinase RGI4">
    <location>
        <begin position="21"/>
        <end position="1090"/>
    </location>
</feature>
<feature type="topological domain" description="Extracellular" evidence="20">
    <location>
        <begin position="21"/>
        <end position="702"/>
    </location>
</feature>
<feature type="transmembrane region" description="Helical" evidence="9">
    <location>
        <begin position="703"/>
        <end position="723"/>
    </location>
</feature>
<feature type="topological domain" description="Cytoplasmic" evidence="20">
    <location>
        <begin position="724"/>
        <end position="1090"/>
    </location>
</feature>
<feature type="repeat" description="LRR 1" evidence="9">
    <location>
        <begin position="36"/>
        <end position="59"/>
    </location>
</feature>
<feature type="repeat" description="LRR 2" evidence="9">
    <location>
        <begin position="95"/>
        <end position="119"/>
    </location>
</feature>
<feature type="repeat" description="LRR 3" evidence="9">
    <location>
        <begin position="120"/>
        <end position="143"/>
    </location>
</feature>
<feature type="repeat" description="LRR 4" evidence="9">
    <location>
        <begin position="145"/>
        <end position="166"/>
    </location>
</feature>
<feature type="repeat" description="LRR 5" evidence="9">
    <location>
        <begin position="168"/>
        <end position="191"/>
    </location>
</feature>
<feature type="repeat" description="LRR 6" evidence="9">
    <location>
        <begin position="216"/>
        <end position="240"/>
    </location>
</feature>
<feature type="repeat" description="LRR 7" evidence="9">
    <location>
        <begin position="242"/>
        <end position="264"/>
    </location>
</feature>
<feature type="repeat" description="LRR 8" evidence="9">
    <location>
        <begin position="265"/>
        <end position="288"/>
    </location>
</feature>
<feature type="repeat" description="LRR 9" evidence="9">
    <location>
        <begin position="289"/>
        <end position="312"/>
    </location>
</feature>
<feature type="repeat" description="LRR 10" evidence="9">
    <location>
        <begin position="314"/>
        <end position="335"/>
    </location>
</feature>
<feature type="repeat" description="LRR 11" evidence="9">
    <location>
        <begin position="336"/>
        <end position="360"/>
    </location>
</feature>
<feature type="repeat" description="LRR 12" evidence="9">
    <location>
        <begin position="362"/>
        <end position="386"/>
    </location>
</feature>
<feature type="repeat" description="LRR 13" evidence="9">
    <location>
        <begin position="408"/>
        <end position="432"/>
    </location>
</feature>
<feature type="repeat" description="LRR 14" evidence="9">
    <location>
        <begin position="434"/>
        <end position="456"/>
    </location>
</feature>
<feature type="repeat" description="LRR 15" evidence="9">
    <location>
        <begin position="457"/>
        <end position="480"/>
    </location>
</feature>
<feature type="repeat" description="LRR 16" evidence="9">
    <location>
        <begin position="481"/>
        <end position="504"/>
    </location>
</feature>
<feature type="repeat" description="LRR 17" evidence="9">
    <location>
        <begin position="506"/>
        <end position="526"/>
    </location>
</feature>
<feature type="repeat" description="LRR 18" evidence="9">
    <location>
        <begin position="527"/>
        <end position="550"/>
    </location>
</feature>
<feature type="repeat" description="LRR 19" evidence="9">
    <location>
        <begin position="551"/>
        <end position="574"/>
    </location>
</feature>
<feature type="repeat" description="LRR 20" evidence="9">
    <location>
        <begin position="576"/>
        <end position="598"/>
    </location>
</feature>
<feature type="repeat" description="LRR 21" evidence="9">
    <location>
        <begin position="600"/>
        <end position="622"/>
    </location>
</feature>
<feature type="repeat" description="LRR 22" evidence="9">
    <location>
        <begin position="623"/>
        <end position="646"/>
    </location>
</feature>
<feature type="repeat" description="LRR 23" evidence="9">
    <location>
        <begin position="647"/>
        <end position="670"/>
    </location>
</feature>
<feature type="domain" description="Protein kinase" evidence="10">
    <location>
        <begin position="758"/>
        <end position="1040"/>
    </location>
</feature>
<feature type="repeat" description="LRR 24" evidence="9">
    <location>
        <begin position="1037"/>
        <end position="1060"/>
    </location>
</feature>
<feature type="region of interest" description="Disordered" evidence="12">
    <location>
        <begin position="1054"/>
        <end position="1079"/>
    </location>
</feature>
<feature type="short sequence motif" description="Small peptide recognition" evidence="1">
    <location>
        <begin position="176"/>
        <end position="177"/>
    </location>
</feature>
<feature type="short sequence motif" description="Small peptide recognition" evidence="1">
    <location>
        <begin position="198"/>
        <end position="201"/>
    </location>
</feature>
<feature type="short sequence motif" description="Small peptide recognition" evidence="1">
    <location>
        <begin position="221"/>
        <end position="226"/>
    </location>
</feature>
<feature type="short sequence motif" description="Small peptide recognition" evidence="1">
    <location>
        <position position="249"/>
    </location>
</feature>
<feature type="short sequence motif" description="CLE45 peptide binding" evidence="4">
    <location>
        <begin position="269"/>
        <end position="273"/>
    </location>
</feature>
<feature type="short sequence motif" description="Small peptide recognition" evidence="1">
    <location>
        <begin position="271"/>
        <end position="273"/>
    </location>
</feature>
<feature type="short sequence motif" description="Small peptide recognition" evidence="1">
    <location>
        <begin position="319"/>
        <end position="322"/>
    </location>
</feature>
<feature type="short sequence motif" description="Small peptide recognition" evidence="1">
    <location>
        <begin position="341"/>
        <end position="343"/>
    </location>
</feature>
<feature type="short sequence motif" description="Small peptide recognition" evidence="1">
    <location>
        <begin position="389"/>
        <end position="393"/>
    </location>
</feature>
<feature type="short sequence motif" description="Small peptide recognition" evidence="1">
    <location>
        <begin position="415"/>
        <end position="418"/>
    </location>
</feature>
<feature type="short sequence motif" description="Small peptide recognition" evidence="1">
    <location>
        <begin position="437"/>
        <end position="441"/>
    </location>
</feature>
<feature type="short sequence motif" description="Small peptide recognition" evidence="1">
    <location>
        <begin position="461"/>
        <end position="463"/>
    </location>
</feature>
<feature type="active site" description="Proton acceptor" evidence="10">
    <location>
        <position position="882"/>
    </location>
</feature>
<feature type="binding site" evidence="10">
    <location>
        <begin position="764"/>
        <end position="772"/>
    </location>
    <ligand>
        <name>ATP</name>
        <dbReference type="ChEBI" id="CHEBI:30616"/>
    </ligand>
</feature>
<feature type="binding site" evidence="10">
    <location>
        <position position="786"/>
    </location>
    <ligand>
        <name>ATP</name>
        <dbReference type="ChEBI" id="CHEBI:30616"/>
    </ligand>
</feature>
<feature type="site" description="Essential for autophosphorylation activity" evidence="6">
    <location>
        <position position="786"/>
    </location>
</feature>
<feature type="modified residue" description="Phosphotyrosine" evidence="3">
    <location>
        <position position="829"/>
    </location>
</feature>
<feature type="modified residue" description="Phosphotyrosine" evidence="2">
    <location>
        <position position="869"/>
    </location>
</feature>
<feature type="modified residue" description="Phosphotyrosine" evidence="2">
    <location>
        <position position="932"/>
    </location>
</feature>
<feature type="glycosylation site" description="N-linked (GlcNAc...) asparagine" evidence="11">
    <location>
        <position position="43"/>
    </location>
</feature>
<feature type="glycosylation site" description="N-linked (GlcNAc...) asparagine" evidence="11">
    <location>
        <position position="107"/>
    </location>
</feature>
<feature type="glycosylation site" description="N-linked (GlcNAc...) asparagine" evidence="11">
    <location>
        <position position="263"/>
    </location>
</feature>
<feature type="glycosylation site" description="N-linked (GlcNAc...) asparagine" evidence="11">
    <location>
        <position position="359"/>
    </location>
</feature>
<feature type="glycosylation site" description="N-linked (GlcNAc...) asparagine" evidence="11">
    <location>
        <position position="420"/>
    </location>
</feature>
<feature type="glycosylation site" description="N-linked (GlcNAc...) asparagine" evidence="11">
    <location>
        <position position="434"/>
    </location>
</feature>
<feature type="glycosylation site" description="N-linked (GlcNAc...) asparagine" evidence="11">
    <location>
        <position position="455"/>
    </location>
</feature>
<feature type="glycosylation site" description="N-linked (GlcNAc...) asparagine" evidence="11">
    <location>
        <position position="606"/>
    </location>
</feature>
<feature type="glycosylation site" description="N-linked (GlcNAc...) asparagine" evidence="11">
    <location>
        <position position="653"/>
    </location>
</feature>
<feature type="disulfide bond" evidence="5">
    <location>
        <begin position="60"/>
        <end position="67"/>
    </location>
</feature>
<feature type="splice variant" id="VSP_060889" description="In isoform 2.">
    <original>EHASMQHITEKSDVYSYG</original>
    <variation>GKIQNFDFNVINLSISKY</variation>
    <location>
        <begin position="936"/>
        <end position="953"/>
    </location>
</feature>
<feature type="splice variant" id="VSP_060890" description="In isoform 2.">
    <location>
        <begin position="954"/>
        <end position="1090"/>
    </location>
</feature>
<feature type="sequence conflict" description="In Ref. 5; BAF02094." evidence="20" ref="5">
    <original>D</original>
    <variation>G</variation>
    <location>
        <position position="948"/>
    </location>
</feature>
<keyword id="KW-0025">Alternative splicing</keyword>
<keyword id="KW-0067">ATP-binding</keyword>
<keyword id="KW-1003">Cell membrane</keyword>
<keyword id="KW-1015">Disulfide bond</keyword>
<keyword id="KW-0325">Glycoprotein</keyword>
<keyword id="KW-0418">Kinase</keyword>
<keyword id="KW-0433">Leucine-rich repeat</keyword>
<keyword id="KW-0472">Membrane</keyword>
<keyword id="KW-0547">Nucleotide-binding</keyword>
<keyword id="KW-0597">Phosphoprotein</keyword>
<keyword id="KW-0675">Receptor</keyword>
<keyword id="KW-1185">Reference proteome</keyword>
<keyword id="KW-0677">Repeat</keyword>
<keyword id="KW-0723">Serine/threonine-protein kinase</keyword>
<keyword id="KW-0732">Signal</keyword>
<keyword id="KW-0808">Transferase</keyword>
<keyword id="KW-0812">Transmembrane</keyword>
<keyword id="KW-1133">Transmembrane helix</keyword>
<keyword id="KW-0832">Ubl conjugation</keyword>
<dbReference type="EC" id="2.7.11.1" evidence="10"/>
<dbReference type="EMBL" id="AB011476">
    <property type="protein sequence ID" value="BAB09286.1"/>
    <property type="status" value="ALT_SEQ"/>
    <property type="molecule type" value="Genomic_DNA"/>
</dbReference>
<dbReference type="EMBL" id="CP002688">
    <property type="protein sequence ID" value="AED96713.1"/>
    <property type="molecule type" value="Genomic_DNA"/>
</dbReference>
<dbReference type="EMBL" id="CP002688">
    <property type="protein sequence ID" value="AED96714.1"/>
    <property type="molecule type" value="Genomic_DNA"/>
</dbReference>
<dbReference type="EMBL" id="AY072083">
    <property type="protein sequence ID" value="AAL59906.1"/>
    <property type="molecule type" value="mRNA"/>
</dbReference>
<dbReference type="EMBL" id="FJ708803">
    <property type="protein sequence ID" value="ACN59394.1"/>
    <property type="molecule type" value="mRNA"/>
</dbReference>
<dbReference type="EMBL" id="AK230293">
    <property type="protein sequence ID" value="BAF02094.1"/>
    <property type="status" value="ALT_SEQ"/>
    <property type="molecule type" value="mRNA"/>
</dbReference>
<dbReference type="RefSeq" id="NP_001032080.1">
    <molecule id="F4K6B8-1"/>
    <property type="nucleotide sequence ID" value="NM_001037003.2"/>
</dbReference>
<dbReference type="RefSeq" id="NP_200415.2">
    <molecule id="F4K6B8-2"/>
    <property type="nucleotide sequence ID" value="NM_124986.3"/>
</dbReference>
<dbReference type="SMR" id="F4K6B8"/>
<dbReference type="FunCoup" id="F4K6B8">
    <property type="interactions" value="339"/>
</dbReference>
<dbReference type="IntAct" id="F4K6B8">
    <property type="interactions" value="43"/>
</dbReference>
<dbReference type="STRING" id="3702.F4K6B8"/>
<dbReference type="GlyCosmos" id="F4K6B8">
    <property type="glycosylation" value="9 sites, No reported glycans"/>
</dbReference>
<dbReference type="GlyGen" id="F4K6B8">
    <property type="glycosylation" value="9 sites"/>
</dbReference>
<dbReference type="iPTMnet" id="F4K6B8"/>
<dbReference type="PaxDb" id="3702-AT5G56040.2"/>
<dbReference type="ProteomicsDB" id="183811"/>
<dbReference type="ProteomicsDB" id="203984">
    <molecule id="F4K6B8-1"/>
</dbReference>
<dbReference type="EnsemblPlants" id="AT5G56040.1">
    <molecule id="F4K6B8-2"/>
    <property type="protein sequence ID" value="AT5G56040.1"/>
    <property type="gene ID" value="AT5G56040"/>
</dbReference>
<dbReference type="EnsemblPlants" id="AT5G56040.2">
    <molecule id="F4K6B8-1"/>
    <property type="protein sequence ID" value="AT5G56040.2"/>
    <property type="gene ID" value="AT5G56040"/>
</dbReference>
<dbReference type="GeneID" id="835702"/>
<dbReference type="Gramene" id="AT5G56040.1">
    <molecule id="F4K6B8-2"/>
    <property type="protein sequence ID" value="AT5G56040.1"/>
    <property type="gene ID" value="AT5G56040"/>
</dbReference>
<dbReference type="Gramene" id="AT5G56040.2">
    <molecule id="F4K6B8-1"/>
    <property type="protein sequence ID" value="AT5G56040.2"/>
    <property type="gene ID" value="AT5G56040"/>
</dbReference>
<dbReference type="KEGG" id="ath:AT5G56040"/>
<dbReference type="Araport" id="AT5G56040"/>
<dbReference type="TAIR" id="AT5G56040">
    <property type="gene designation" value="SKM2"/>
</dbReference>
<dbReference type="eggNOG" id="ENOG502QSU9">
    <property type="taxonomic scope" value="Eukaryota"/>
</dbReference>
<dbReference type="HOGENOM" id="CLU_000288_22_1_1"/>
<dbReference type="InParanoid" id="F4K6B8"/>
<dbReference type="OMA" id="DKSPCNW"/>
<dbReference type="PhylomeDB" id="F4K6B8"/>
<dbReference type="PRO" id="PR:F4K6B8"/>
<dbReference type="Proteomes" id="UP000006548">
    <property type="component" value="Chromosome 5"/>
</dbReference>
<dbReference type="ExpressionAtlas" id="F4K6B8">
    <property type="expression patterns" value="baseline and differential"/>
</dbReference>
<dbReference type="GO" id="GO:0005886">
    <property type="term" value="C:plasma membrane"/>
    <property type="evidence" value="ECO:0007669"/>
    <property type="project" value="UniProtKB-SubCell"/>
</dbReference>
<dbReference type="GO" id="GO:0005524">
    <property type="term" value="F:ATP binding"/>
    <property type="evidence" value="ECO:0007669"/>
    <property type="project" value="UniProtKB-KW"/>
</dbReference>
<dbReference type="GO" id="GO:0042802">
    <property type="term" value="F:identical protein binding"/>
    <property type="evidence" value="ECO:0000353"/>
    <property type="project" value="IntAct"/>
</dbReference>
<dbReference type="GO" id="GO:0042277">
    <property type="term" value="F:peptide binding"/>
    <property type="evidence" value="ECO:0000353"/>
    <property type="project" value="UniProtKB"/>
</dbReference>
<dbReference type="GO" id="GO:0001653">
    <property type="term" value="F:peptide receptor activity"/>
    <property type="evidence" value="ECO:0000315"/>
    <property type="project" value="UniProtKB"/>
</dbReference>
<dbReference type="GO" id="GO:0004674">
    <property type="term" value="F:protein serine/threonine kinase activity"/>
    <property type="evidence" value="ECO:0007669"/>
    <property type="project" value="UniProtKB-KW"/>
</dbReference>
<dbReference type="GO" id="GO:0010074">
    <property type="term" value="P:maintenance of meristem identity"/>
    <property type="evidence" value="ECO:0000315"/>
    <property type="project" value="UniProtKB"/>
</dbReference>
<dbReference type="GO" id="GO:0080092">
    <property type="term" value="P:regulation of pollen tube growth"/>
    <property type="evidence" value="ECO:0000315"/>
    <property type="project" value="UniProtKB"/>
</dbReference>
<dbReference type="GO" id="GO:0010082">
    <property type="term" value="P:regulation of root meristem growth"/>
    <property type="evidence" value="ECO:0000316"/>
    <property type="project" value="TAIR"/>
</dbReference>
<dbReference type="GO" id="GO:0009266">
    <property type="term" value="P:response to temperature stimulus"/>
    <property type="evidence" value="ECO:0000270"/>
    <property type="project" value="UniProtKB"/>
</dbReference>
<dbReference type="FunFam" id="3.80.10.10:FF:001034">
    <property type="entry name" value="Leucine-rich receptor-like protein kinase family protein"/>
    <property type="match status" value="1"/>
</dbReference>
<dbReference type="FunFam" id="3.80.10.10:FF:001157">
    <property type="entry name" value="Leucine-rich receptor-like protein kinase family protein"/>
    <property type="match status" value="1"/>
</dbReference>
<dbReference type="FunFam" id="3.80.10.10:FF:000041">
    <property type="entry name" value="LRR receptor-like serine/threonine-protein kinase ERECTA"/>
    <property type="match status" value="1"/>
</dbReference>
<dbReference type="FunFam" id="1.10.510.10:FF:000276">
    <property type="entry name" value="LRR receptor-like serine/threonine-protein kinase RCH1"/>
    <property type="match status" value="1"/>
</dbReference>
<dbReference type="FunFam" id="3.80.10.10:FF:000416">
    <property type="entry name" value="Probable leucine-rich repeat receptor-like protein kinase At5g63930"/>
    <property type="match status" value="1"/>
</dbReference>
<dbReference type="FunFam" id="3.30.200.20:FF:000642">
    <property type="entry name" value="Putative LRR receptor-like serine/threonine-protein kinase"/>
    <property type="match status" value="1"/>
</dbReference>
<dbReference type="FunFam" id="3.80.10.10:FF:000270">
    <property type="entry name" value="Putative LRR receptor-like serine/threonine-protein kinase"/>
    <property type="match status" value="1"/>
</dbReference>
<dbReference type="Gene3D" id="3.30.200.20">
    <property type="entry name" value="Phosphorylase Kinase, domain 1"/>
    <property type="match status" value="1"/>
</dbReference>
<dbReference type="Gene3D" id="3.80.10.10">
    <property type="entry name" value="Ribonuclease Inhibitor"/>
    <property type="match status" value="5"/>
</dbReference>
<dbReference type="Gene3D" id="1.10.510.10">
    <property type="entry name" value="Transferase(Phosphotransferase) domain 1"/>
    <property type="match status" value="1"/>
</dbReference>
<dbReference type="InterPro" id="IPR011009">
    <property type="entry name" value="Kinase-like_dom_sf"/>
</dbReference>
<dbReference type="InterPro" id="IPR001611">
    <property type="entry name" value="Leu-rich_rpt"/>
</dbReference>
<dbReference type="InterPro" id="IPR003591">
    <property type="entry name" value="Leu-rich_rpt_typical-subtyp"/>
</dbReference>
<dbReference type="InterPro" id="IPR032675">
    <property type="entry name" value="LRR_dom_sf"/>
</dbReference>
<dbReference type="InterPro" id="IPR013210">
    <property type="entry name" value="LRR_N_plant-typ"/>
</dbReference>
<dbReference type="InterPro" id="IPR055414">
    <property type="entry name" value="LRR_R13L4/SHOC2-like"/>
</dbReference>
<dbReference type="InterPro" id="IPR000719">
    <property type="entry name" value="Prot_kinase_dom"/>
</dbReference>
<dbReference type="InterPro" id="IPR017441">
    <property type="entry name" value="Protein_kinase_ATP_BS"/>
</dbReference>
<dbReference type="InterPro" id="IPR008271">
    <property type="entry name" value="Ser/Thr_kinase_AS"/>
</dbReference>
<dbReference type="PANTHER" id="PTHR27000">
    <property type="entry name" value="LEUCINE-RICH REPEAT RECEPTOR-LIKE PROTEIN KINASE FAMILY PROTEIN-RELATED"/>
    <property type="match status" value="1"/>
</dbReference>
<dbReference type="PANTHER" id="PTHR27000:SF676">
    <property type="entry name" value="LRR RECEPTOR-LIKE SERINE_THREONINE-PROTEIN KINASE RGI3"/>
    <property type="match status" value="1"/>
</dbReference>
<dbReference type="Pfam" id="PF00560">
    <property type="entry name" value="LRR_1"/>
    <property type="match status" value="8"/>
</dbReference>
<dbReference type="Pfam" id="PF23598">
    <property type="entry name" value="LRR_14"/>
    <property type="match status" value="1"/>
</dbReference>
<dbReference type="Pfam" id="PF13855">
    <property type="entry name" value="LRR_8"/>
    <property type="match status" value="1"/>
</dbReference>
<dbReference type="Pfam" id="PF08263">
    <property type="entry name" value="LRRNT_2"/>
    <property type="match status" value="1"/>
</dbReference>
<dbReference type="Pfam" id="PF00069">
    <property type="entry name" value="Pkinase"/>
    <property type="match status" value="1"/>
</dbReference>
<dbReference type="PRINTS" id="PR00019">
    <property type="entry name" value="LEURICHRPT"/>
</dbReference>
<dbReference type="SMART" id="SM00369">
    <property type="entry name" value="LRR_TYP"/>
    <property type="match status" value="9"/>
</dbReference>
<dbReference type="SMART" id="SM00220">
    <property type="entry name" value="S_TKc"/>
    <property type="match status" value="1"/>
</dbReference>
<dbReference type="SUPFAM" id="SSF56112">
    <property type="entry name" value="Protein kinase-like (PK-like)"/>
    <property type="match status" value="1"/>
</dbReference>
<dbReference type="SUPFAM" id="SSF52047">
    <property type="entry name" value="RNI-like"/>
    <property type="match status" value="2"/>
</dbReference>
<dbReference type="PROSITE" id="PS00107">
    <property type="entry name" value="PROTEIN_KINASE_ATP"/>
    <property type="match status" value="1"/>
</dbReference>
<dbReference type="PROSITE" id="PS50011">
    <property type="entry name" value="PROTEIN_KINASE_DOM"/>
    <property type="match status" value="1"/>
</dbReference>
<dbReference type="PROSITE" id="PS00108">
    <property type="entry name" value="PROTEIN_KINASE_ST"/>
    <property type="match status" value="1"/>
</dbReference>
<evidence type="ECO:0000250" key="1">
    <source>
        <dbReference type="UniProtKB" id="C0LGR3"/>
    </source>
</evidence>
<evidence type="ECO:0000250" key="2">
    <source>
        <dbReference type="UniProtKB" id="C0LGT6"/>
    </source>
</evidence>
<evidence type="ECO:0000250" key="3">
    <source>
        <dbReference type="UniProtKB" id="O22476"/>
    </source>
</evidence>
<evidence type="ECO:0000250" key="4">
    <source>
        <dbReference type="UniProtKB" id="O65440"/>
    </source>
</evidence>
<evidence type="ECO:0000250" key="5">
    <source>
        <dbReference type="UniProtKB" id="Q94AG2"/>
    </source>
</evidence>
<evidence type="ECO:0000250" key="6">
    <source>
        <dbReference type="UniProtKB" id="Q9LHP4"/>
    </source>
</evidence>
<evidence type="ECO:0000250" key="7">
    <source>
        <dbReference type="UniProtKB" id="Q9SYQ8"/>
    </source>
</evidence>
<evidence type="ECO:0000250" key="8">
    <source>
        <dbReference type="UniProtKB" id="Q9ZWC8"/>
    </source>
</evidence>
<evidence type="ECO:0000255" key="9"/>
<evidence type="ECO:0000255" key="10">
    <source>
        <dbReference type="PROSITE-ProRule" id="PRU00159"/>
    </source>
</evidence>
<evidence type="ECO:0000255" key="11">
    <source>
        <dbReference type="PROSITE-ProRule" id="PRU00498"/>
    </source>
</evidence>
<evidence type="ECO:0000256" key="12">
    <source>
        <dbReference type="SAM" id="MobiDB-lite"/>
    </source>
</evidence>
<evidence type="ECO:0000269" key="13">
    <source>
    </source>
</evidence>
<evidence type="ECO:0000269" key="14">
    <source>
    </source>
</evidence>
<evidence type="ECO:0000269" key="15">
    <source>
    </source>
</evidence>
<evidence type="ECO:0000269" key="16">
    <source>
    </source>
</evidence>
<evidence type="ECO:0000303" key="17">
    <source>
    </source>
</evidence>
<evidence type="ECO:0000303" key="18">
    <source>
    </source>
</evidence>
<evidence type="ECO:0000303" key="19">
    <source>
    </source>
</evidence>
<evidence type="ECO:0000305" key="20"/>
<evidence type="ECO:0000305" key="21">
    <source>
    </source>
</evidence>
<evidence type="ECO:0000312" key="22">
    <source>
        <dbReference type="Araport" id="AT5G56040"/>
    </source>
</evidence>
<evidence type="ECO:0000312" key="23">
    <source>
        <dbReference type="EMBL" id="BAB09286.1"/>
    </source>
</evidence>
<name>RGI4_ARATH</name>
<comment type="function">
    <text evidence="8 13 14 15 16">Receptor with a serine/threonine-protein kinase activity (By similarity). Together with SKM1, LRR-rich receptor-like kinase (LRR-RLK) required for male fertility by the perception of CLE43 and CLE45 peptides and the transduction of their promoting action in pollen tubes, especially under relatively high temperature (at 30 degrees Celsius), thus conferring tolerance against high temperature probably through the maintenance of mitochondrial activity (PubMed:23910659). Seems to not be involved in the perception of CLE45 peptide in roots (PubMed:27354416). Together with RGI1, RGI2, RGI3, RGI4 and RGI5, acts as receptor of RGF1, a peptide hormone that maintains the postembryonic root stem cell niche by regulating the expression levels and patterns of the transcription factor PLETHORA (PLT) (PubMed:27229311, PubMed:27229312). Links RGF1 signal with its downstream components (PubMed:27229311).</text>
</comment>
<comment type="catalytic activity">
    <reaction evidence="10">
        <text>L-seryl-[protein] + ATP = O-phospho-L-seryl-[protein] + ADP + H(+)</text>
        <dbReference type="Rhea" id="RHEA:17989"/>
        <dbReference type="Rhea" id="RHEA-COMP:9863"/>
        <dbReference type="Rhea" id="RHEA-COMP:11604"/>
        <dbReference type="ChEBI" id="CHEBI:15378"/>
        <dbReference type="ChEBI" id="CHEBI:29999"/>
        <dbReference type="ChEBI" id="CHEBI:30616"/>
        <dbReference type="ChEBI" id="CHEBI:83421"/>
        <dbReference type="ChEBI" id="CHEBI:456216"/>
        <dbReference type="EC" id="2.7.11.1"/>
    </reaction>
</comment>
<comment type="catalytic activity">
    <reaction evidence="10">
        <text>L-threonyl-[protein] + ATP = O-phospho-L-threonyl-[protein] + ADP + H(+)</text>
        <dbReference type="Rhea" id="RHEA:46608"/>
        <dbReference type="Rhea" id="RHEA-COMP:11060"/>
        <dbReference type="Rhea" id="RHEA-COMP:11605"/>
        <dbReference type="ChEBI" id="CHEBI:15378"/>
        <dbReference type="ChEBI" id="CHEBI:30013"/>
        <dbReference type="ChEBI" id="CHEBI:30616"/>
        <dbReference type="ChEBI" id="CHEBI:61977"/>
        <dbReference type="ChEBI" id="CHEBI:456216"/>
        <dbReference type="EC" id="2.7.11.1"/>
    </reaction>
</comment>
<comment type="subunit">
    <text evidence="7 14">Self-interacts (By similarity). Interacts with RGF1; this interaction triggers its phosphorylation and ubiquitination and the formation of heterodimers with SERK1 (PubMed:27229311).</text>
</comment>
<comment type="interaction">
    <interactant intactId="EBI-1238236">
        <id>F4K6B8</id>
    </interactant>
    <interactant intactId="EBI-20654480">
        <id>C0LGR6</id>
        <label>At4g29180</label>
    </interactant>
    <organismsDiffer>false</organismsDiffer>
    <experiments>2</experiments>
</comment>
<comment type="interaction">
    <interactant intactId="EBI-1238236">
        <id>F4K6B8</id>
    </interactant>
    <interactant intactId="EBI-20653325">
        <id>O65440-2</id>
        <label>BAM3</label>
    </interactant>
    <organismsDiffer>false</organismsDiffer>
    <experiments>2</experiments>
</comment>
<comment type="interaction">
    <interactant intactId="EBI-1238236">
        <id>F4K6B8</id>
    </interactant>
    <interactant intactId="EBI-1238236">
        <id>F4K6B8</id>
        <label>RGI4</label>
    </interactant>
    <organismsDiffer>false</organismsDiffer>
    <experiments>2</experiments>
</comment>
<comment type="interaction">
    <interactant intactId="EBI-1238236">
        <id>F4K6B8</id>
    </interactant>
    <interactant intactId="EBI-1544507">
        <id>Q9LP77</id>
        <label>RKL1</label>
    </interactant>
    <organismsDiffer>false</organismsDiffer>
    <experiments>2</experiments>
</comment>
<comment type="subcellular location">
    <subcellularLocation>
        <location evidence="8">Cell membrane</location>
        <topology evidence="9">Single-pass type I membrane protein</topology>
    </subcellularLocation>
</comment>
<comment type="alternative products">
    <event type="alternative splicing"/>
    <isoform>
        <id>F4K6B8-1</id>
        <name>1</name>
        <sequence type="displayed"/>
    </isoform>
    <isoform>
        <id>F4K6B8-2</id>
        <name>2</name>
        <sequence type="described" ref="VSP_060889 VSP_060890"/>
    </isoform>
</comment>
<comment type="tissue specificity">
    <text evidence="13 14 16">Expressed in floers, pollen grains and stipules (PubMed:23910659, PubMed:27229311). Present in roots (PubMed:27229311, PubMed:27354416).</text>
</comment>
<comment type="developmental stage">
    <text evidence="16">Present throughout the root, starting from the transition zone and including transition and elongation zones, but absent from the meristem.</text>
</comment>
<comment type="induction">
    <text evidence="13">Slightly induced in pollen upon high-temperature exposure (HTE).</text>
</comment>
<comment type="PTM">
    <text evidence="3">Autophosphorylated.</text>
</comment>
<comment type="PTM">
    <text evidence="6">Phosphorylated and ubiquitinated upon interaction with RGF1, thus leading to activation a subsequent degradation.</text>
</comment>
<comment type="disruption phenotype">
    <text evidence="13 14 15">Smaller root meristem size and fewer root meristematic cortex cells, associated with shorter roots and a slighty reduced sensitivity to RGF1 (PubMed:27229311). Insensitivity of pollen tubes to CLE43 and, partially, to CLE45 peptides-mediated growth stimulation (PubMed:23910659). Pollen tubes of plants missing both SKM1 and SKM2 are fully insensitive to CLE45 peptides (PubMed:23910659). Quintuple mutants rgi1 rgi2 rgi3 rgi4 rgi5 display a consistent short primary root phenotype with a small size of meristem associated with a total insensitivity to RGF1 and undetectable levels of PLT1 and PLT2 (PubMed:27229312).</text>
</comment>
<comment type="similarity">
    <text evidence="10">Belongs to the protein kinase superfamily. Ser/Thr protein kinase family.</text>
</comment>
<comment type="sequence caution" evidence="20">
    <conflict type="erroneous gene model prediction">
        <sequence resource="EMBL-CDS" id="BAB09286"/>
    </conflict>
</comment>
<comment type="sequence caution" evidence="20">
    <conflict type="erroneous translation">
        <sequence resource="EMBL-CDS" id="BAF02094"/>
    </conflict>
</comment>
<proteinExistence type="evidence at protein level"/>
<protein>
    <recommendedName>
        <fullName evidence="21">Leucine-rich repeat receptor-like serine/threonine-protein kinase RGI4</fullName>
        <ecNumber evidence="10">2.7.11.1</ecNumber>
    </recommendedName>
    <alternativeName>
        <fullName evidence="18">Protein RECEPTOR OF RGF1 2</fullName>
    </alternativeName>
    <alternativeName>
        <fullName evidence="19">Protein RGF1 INSENSITIVE 4</fullName>
    </alternativeName>
    <alternativeName>
        <fullName evidence="17">Protein STERILITY-REGULATING KINASE MEMBER 2</fullName>
    </alternativeName>
</protein>
<accession>F4K6B8</accession>
<accession>Q0WLB3</accession>
<accession>Q8VYG7</accession>
<accession>Q9FKU3</accession>
<reference key="1">
    <citation type="journal article" date="1998" name="DNA Res.">
        <title>Structural analysis of Arabidopsis thaliana chromosome 5. V. Sequence features of the regions of 1,381,565 bp covered by twenty one physically assigned P1 and TAC clones.</title>
        <authorList>
            <person name="Kaneko T."/>
            <person name="Kotani H."/>
            <person name="Nakamura Y."/>
            <person name="Sato S."/>
            <person name="Asamizu E."/>
            <person name="Miyajima N."/>
            <person name="Tabata S."/>
        </authorList>
    </citation>
    <scope>NUCLEOTIDE SEQUENCE [LARGE SCALE GENOMIC DNA]</scope>
    <source>
        <strain>cv. Columbia</strain>
    </source>
</reference>
<reference key="2">
    <citation type="journal article" date="2017" name="Plant J.">
        <title>Araport11: a complete reannotation of the Arabidopsis thaliana reference genome.</title>
        <authorList>
            <person name="Cheng C.Y."/>
            <person name="Krishnakumar V."/>
            <person name="Chan A.P."/>
            <person name="Thibaud-Nissen F."/>
            <person name="Schobel S."/>
            <person name="Town C.D."/>
        </authorList>
    </citation>
    <scope>GENOME REANNOTATION</scope>
    <source>
        <strain>cv. Columbia</strain>
    </source>
</reference>
<reference key="3">
    <citation type="journal article" date="2003" name="Science">
        <title>Empirical analysis of transcriptional activity in the Arabidopsis genome.</title>
        <authorList>
            <person name="Yamada K."/>
            <person name="Lim J."/>
            <person name="Dale J.M."/>
            <person name="Chen H."/>
            <person name="Shinn P."/>
            <person name="Palm C.J."/>
            <person name="Southwick A.M."/>
            <person name="Wu H.C."/>
            <person name="Kim C.J."/>
            <person name="Nguyen M."/>
            <person name="Pham P.K."/>
            <person name="Cheuk R.F."/>
            <person name="Karlin-Newmann G."/>
            <person name="Liu S.X."/>
            <person name="Lam B."/>
            <person name="Sakano H."/>
            <person name="Wu T."/>
            <person name="Yu G."/>
            <person name="Miranda M."/>
            <person name="Quach H.L."/>
            <person name="Tripp M."/>
            <person name="Chang C.H."/>
            <person name="Lee J.M."/>
            <person name="Toriumi M.J."/>
            <person name="Chan M.M."/>
            <person name="Tang C.C."/>
            <person name="Onodera C.S."/>
            <person name="Deng J.M."/>
            <person name="Akiyama K."/>
            <person name="Ansari Y."/>
            <person name="Arakawa T."/>
            <person name="Banh J."/>
            <person name="Banno F."/>
            <person name="Bowser L."/>
            <person name="Brooks S.Y."/>
            <person name="Carninci P."/>
            <person name="Chao Q."/>
            <person name="Choy N."/>
            <person name="Enju A."/>
            <person name="Goldsmith A.D."/>
            <person name="Gurjal M."/>
            <person name="Hansen N.F."/>
            <person name="Hayashizaki Y."/>
            <person name="Johnson-Hopson C."/>
            <person name="Hsuan V.W."/>
            <person name="Iida K."/>
            <person name="Karnes M."/>
            <person name="Khan S."/>
            <person name="Koesema E."/>
            <person name="Ishida J."/>
            <person name="Jiang P.X."/>
            <person name="Jones T."/>
            <person name="Kawai J."/>
            <person name="Kamiya A."/>
            <person name="Meyers C."/>
            <person name="Nakajima M."/>
            <person name="Narusaka M."/>
            <person name="Seki M."/>
            <person name="Sakurai T."/>
            <person name="Satou M."/>
            <person name="Tamse R."/>
            <person name="Vaysberg M."/>
            <person name="Wallender E.K."/>
            <person name="Wong C."/>
            <person name="Yamamura Y."/>
            <person name="Yuan S."/>
            <person name="Shinozaki K."/>
            <person name="Davis R.W."/>
            <person name="Theologis A."/>
            <person name="Ecker J.R."/>
        </authorList>
    </citation>
    <scope>NUCLEOTIDE SEQUENCE [LARGE SCALE MRNA] (ISOFORM 2)</scope>
    <source>
        <strain>cv. Columbia</strain>
    </source>
</reference>
<reference key="4">
    <citation type="journal article" date="2010" name="BMC Genomics">
        <title>Genome-wide cloning and sequence analysis of leucine-rich repeat receptor-like protein kinase genes in Arabidopsis thaliana.</title>
        <authorList>
            <person name="Gou X."/>
            <person name="He K."/>
            <person name="Yang H."/>
            <person name="Yuan T."/>
            <person name="Lin H."/>
            <person name="Clouse S.D."/>
            <person name="Li J."/>
        </authorList>
    </citation>
    <scope>NUCLEOTIDE SEQUENCE [LARGE SCALE MRNA] (ISOFORM 2)</scope>
    <source>
        <strain>cv. Columbia</strain>
    </source>
</reference>
<reference key="5">
    <citation type="submission" date="2006-07" db="EMBL/GenBank/DDBJ databases">
        <title>Large-scale analysis of RIKEN Arabidopsis full-length (RAFL) cDNAs.</title>
        <authorList>
            <person name="Totoki Y."/>
            <person name="Seki M."/>
            <person name="Ishida J."/>
            <person name="Nakajima M."/>
            <person name="Enju A."/>
            <person name="Kamiya A."/>
            <person name="Narusaka M."/>
            <person name="Shin-i T."/>
            <person name="Nakagawa M."/>
            <person name="Sakamoto N."/>
            <person name="Oishi K."/>
            <person name="Kohara Y."/>
            <person name="Kobayashi M."/>
            <person name="Toyoda A."/>
            <person name="Sakaki Y."/>
            <person name="Sakurai T."/>
            <person name="Iida K."/>
            <person name="Akiyama K."/>
            <person name="Satou M."/>
            <person name="Toyoda T."/>
            <person name="Konagaya A."/>
            <person name="Carninci P."/>
            <person name="Kawai J."/>
            <person name="Hayashizaki Y."/>
            <person name="Shinozaki K."/>
        </authorList>
    </citation>
    <scope>NUCLEOTIDE SEQUENCE [LARGE SCALE MRNA] OF 1-1074 (ISOFORM 1)</scope>
    <source>
        <strain>cv. Columbia</strain>
    </source>
</reference>
<reference key="6">
    <citation type="journal article" date="2013" name="Curr. Biol.">
        <title>A novel pollen-pistil interaction conferring high-temperature tolerance during reproduction via CLE45 signaling.</title>
        <authorList>
            <person name="Endo S."/>
            <person name="Shinohara H."/>
            <person name="Matsubayashi Y."/>
            <person name="Fukuda H."/>
        </authorList>
    </citation>
    <scope>FUNCTION</scope>
    <scope>DISRUPTION PHENOTYPE</scope>
    <scope>TISSUE SPECIFICITY</scope>
    <scope>INDUCTION BY HIGH-TEMPERATURE</scope>
</reference>
<reference key="7">
    <citation type="journal article" date="2016" name="Cell Res.">
        <title>Signature motif-guided identification of receptors for peptide hormones essential for root meristem growth.</title>
        <authorList>
            <person name="Song W."/>
            <person name="Liu L."/>
            <person name="Wang J."/>
            <person name="Wu Z."/>
            <person name="Zhang H."/>
            <person name="Tang J."/>
            <person name="Lin G."/>
            <person name="Wang Y."/>
            <person name="Wen X."/>
            <person name="Li W."/>
            <person name="Han Z."/>
            <person name="Guo H."/>
            <person name="Chai J."/>
        </authorList>
    </citation>
    <scope>FUNCTION</scope>
    <scope>DISRUPTION PHENOTYPE</scope>
    <scope>INTERACTION WITH RGF1; SERK1; SERK2 AND BAK1/SERK3</scope>
    <scope>TISSUE SPECIFICITY</scope>
    <scope>DEVELOPMENTAL STAGE</scope>
    <scope>GENE FAMILY</scope>
    <scope>NOMENCLATURE</scope>
    <source>
        <strain>cv. Columbia</strain>
    </source>
</reference>
<reference key="8">
    <citation type="journal article" date="2016" name="Cell Res.">
        <title>RGF1 INSENSITIVE 1 to 5, a group of LRR receptor-like kinases, are essential for the perception of root meristem growth factor 1 in Arabidopsis thaliana.</title>
        <authorList>
            <person name="Ou Y."/>
            <person name="Lu X."/>
            <person name="Zi Q."/>
            <person name="Xun Q."/>
            <person name="Zhang J."/>
            <person name="Wu Y."/>
            <person name="Shi H."/>
            <person name="Wei Z."/>
            <person name="Zhao B."/>
            <person name="Zhang X."/>
            <person name="He K."/>
            <person name="Gou X."/>
            <person name="Li C."/>
            <person name="Li J."/>
        </authorList>
    </citation>
    <scope>FUNCTION</scope>
    <scope>DISRUPTION PHENOTYPE</scope>
    <source>
        <strain>cv. Columbia</strain>
    </source>
</reference>
<reference key="9">
    <citation type="journal article" date="2016" name="EMBO Rep.">
        <title>Arabidopsis MAKR5 is a positive effector of BAM3-dependent CLE45 signaling.</title>
        <authorList>
            <person name="Kang Y.H."/>
            <person name="Hardtke C.S."/>
        </authorList>
    </citation>
    <scope>FUNCTION</scope>
    <scope>TISSUE SPECIFICITY</scope>
    <scope>DEVELOPMENTAL STAGE</scope>
    <source>
        <strain>cv. Columbia</strain>
    </source>
</reference>
<gene>
    <name evidence="19" type="primary">RGI4</name>
    <name evidence="18" type="synonym">RGFR2</name>
    <name evidence="17" type="synonym">SKM2</name>
    <name evidence="22" type="ordered locus">At5g56040</name>
    <name evidence="23" type="ORF">MDA7.8</name>
</gene>
<sequence length="1090" mass="119331">MPRNPRFCFFLFLLFHSSLFFSIPCFSIDEQGLALLSWKSQLNISGDALSSWKASESNPCQWVGIKCNERGQVSEIQLQVMDFQGPLPATNLRQIKSLTLLSLTSVNLTGSIPKELGDLSELEVLDLADNSLSGEIPVDIFKLKKLKILSLNTNNLEGVIPSELGNLVNLIELTLFDNKLAGEIPRTIGELKNLEIFRAGGNKNLRGELPWEIGNCESLVTLGLAETSLSGRLPASIGNLKKVQTIALYTSLLSGPIPDEIGNCTELQNLYLYQNSISGSIPVSMGRLKKLQSLLLWQNNLVGKIPTELGTCPELFLVDLSENLLTGNIPRSFGNLPNLQELQLSVNQLSGTIPEELANCTKLTHLEIDNNQISGEIPPLIGKLTSLTMFFAWQNQLTGIIPESLSQCQELQAIDLSYNNLSGSIPNGIFEIRNLTKLLLLSNYLSGFIPPDIGNCTNLYRLRLNGNRLAGNIPAEIGNLKNLNFIDISENRLIGNIPPEISGCTSLEFVDLHSNGLTGGLPGTLPKSLQFIDLSDNSLTGSLPTGIGSLTELTKLNLAKNRFSGEIPREISSCRSLQLLNLGDNGFTGEIPNELGRIPSLAISLNLSCNHFTGEIPSRFSSLTNLGTLDVSHNKLAGNLNVLADLQNLVSLNISFNEFSGELPNTLFFRKLPLSVLESNKGLFISTRPENGIQTRHRSAVKVTMSILVAASVVLVLMAVYTLVKAQRITGKQEELDSWEVTLYQKLDFSIDDIVKNLTSANVIGTGSSGVVYRVTIPSGETLAVKKMWSKEENRAFNSEINTLGSIRHRNIIRLLGWCSNRNLKLLFYDYLPNGSLSSLLHGAGKGSGGADWEARYDVVLGVAHALAYLHHDCLPPILHGDVKAMNVLLGSRFESYLADFGLAKIVSGEGVTDGDSSKLSNRPPLAGSYGYMAPEHASMQHITEKSDVYSYGVVLLEVLTGKHPLDPDLPGGAHLVQWVRDHLAGKKDPREILDPRLRGRADPIMHEMLQTLAVSFLCVSNKASDRPMMKDIVAMLKEIRQFDMDRSESDMIKGGKCEKWQPQPLPPEKIVSTPRGSSNCSFAYSDESV</sequence>